<organism>
    <name type="scientific">Bifidobacterium longum subsp. infantis (strain ATCC 15697 / DSM 20088 / JCM 1222 / NCTC 11817 / S12)</name>
    <dbReference type="NCBI Taxonomy" id="391904"/>
    <lineage>
        <taxon>Bacteria</taxon>
        <taxon>Bacillati</taxon>
        <taxon>Actinomycetota</taxon>
        <taxon>Actinomycetes</taxon>
        <taxon>Bifidobacteriales</taxon>
        <taxon>Bifidobacteriaceae</taxon>
        <taxon>Bifidobacterium</taxon>
    </lineage>
</organism>
<gene>
    <name evidence="1" type="primary">rpsT</name>
    <name type="ordered locus">Blon_1487</name>
    <name type="ordered locus">BLIJ_1538</name>
</gene>
<reference key="1">
    <citation type="journal article" date="2008" name="Proc. Natl. Acad. Sci. U.S.A.">
        <title>The genome sequence of Bifidobacterium longum subsp. infantis reveals adaptations for milk utilization within the infant microbiome.</title>
        <authorList>
            <person name="Sela D.A."/>
            <person name="Chapman J."/>
            <person name="Adeuya A."/>
            <person name="Kim J.H."/>
            <person name="Chen F."/>
            <person name="Whitehead T.R."/>
            <person name="Lapidus A."/>
            <person name="Rokhsar D.S."/>
            <person name="Lebrilla C.B."/>
            <person name="German J.B."/>
            <person name="Price N.P."/>
            <person name="Richardson P.M."/>
            <person name="Mills D.A."/>
        </authorList>
    </citation>
    <scope>NUCLEOTIDE SEQUENCE [LARGE SCALE GENOMIC DNA]</scope>
    <source>
        <strain>ATCC 15697 / DSM 20088 / JCM 1222 / NCTC 11817 / S12</strain>
    </source>
</reference>
<reference key="2">
    <citation type="journal article" date="2011" name="Nature">
        <title>Bifidobacteria can protect from enteropathogenic infection through production of acetate.</title>
        <authorList>
            <person name="Fukuda S."/>
            <person name="Toh H."/>
            <person name="Hase K."/>
            <person name="Oshima K."/>
            <person name="Nakanishi Y."/>
            <person name="Yoshimura K."/>
            <person name="Tobe T."/>
            <person name="Clarke J.M."/>
            <person name="Topping D.L."/>
            <person name="Suzuki T."/>
            <person name="Taylor T.D."/>
            <person name="Itoh K."/>
            <person name="Kikuchi J."/>
            <person name="Morita H."/>
            <person name="Hattori M."/>
            <person name="Ohno H."/>
        </authorList>
    </citation>
    <scope>NUCLEOTIDE SEQUENCE [LARGE SCALE GENOMIC DNA]</scope>
    <source>
        <strain>ATCC 15697 / DSM 20088 / JCM 1222 / NCTC 11817 / S12</strain>
    </source>
</reference>
<accession>B7GRY8</accession>
<accession>E8MKP3</accession>
<sequence length="86" mass="8944">MANIKSQKKRVLTNEKAHLRNVAVKSGLKTAIRATREAIAAGDKAAAEAAYKVAAQKLDKAAGAGVIHRNQAANRKSGLAVAINAL</sequence>
<protein>
    <recommendedName>
        <fullName evidence="1">Small ribosomal subunit protein bS20</fullName>
    </recommendedName>
    <alternativeName>
        <fullName evidence="2">30S ribosomal protein S20</fullName>
    </alternativeName>
</protein>
<name>RS20_BIFLS</name>
<feature type="chain" id="PRO_1000135775" description="Small ribosomal subunit protein bS20">
    <location>
        <begin position="1"/>
        <end position="86"/>
    </location>
</feature>
<dbReference type="EMBL" id="CP001095">
    <property type="protein sequence ID" value="ACJ52568.1"/>
    <property type="molecule type" value="Genomic_DNA"/>
</dbReference>
<dbReference type="EMBL" id="AP010889">
    <property type="protein sequence ID" value="BAJ69120.1"/>
    <property type="molecule type" value="Genomic_DNA"/>
</dbReference>
<dbReference type="RefSeq" id="WP_012577807.1">
    <property type="nucleotide sequence ID" value="NZ_JDTT01000028.1"/>
</dbReference>
<dbReference type="SMR" id="B7GRY8"/>
<dbReference type="KEGG" id="bln:Blon_1487"/>
<dbReference type="KEGG" id="blon:BLIJ_1538"/>
<dbReference type="PATRIC" id="fig|391904.8.peg.1551"/>
<dbReference type="HOGENOM" id="CLU_160655_0_1_11"/>
<dbReference type="Proteomes" id="UP000001360">
    <property type="component" value="Chromosome"/>
</dbReference>
<dbReference type="GO" id="GO:0005829">
    <property type="term" value="C:cytosol"/>
    <property type="evidence" value="ECO:0007669"/>
    <property type="project" value="TreeGrafter"/>
</dbReference>
<dbReference type="GO" id="GO:0015935">
    <property type="term" value="C:small ribosomal subunit"/>
    <property type="evidence" value="ECO:0007669"/>
    <property type="project" value="TreeGrafter"/>
</dbReference>
<dbReference type="GO" id="GO:0070181">
    <property type="term" value="F:small ribosomal subunit rRNA binding"/>
    <property type="evidence" value="ECO:0007669"/>
    <property type="project" value="TreeGrafter"/>
</dbReference>
<dbReference type="GO" id="GO:0003735">
    <property type="term" value="F:structural constituent of ribosome"/>
    <property type="evidence" value="ECO:0007669"/>
    <property type="project" value="InterPro"/>
</dbReference>
<dbReference type="GO" id="GO:0006412">
    <property type="term" value="P:translation"/>
    <property type="evidence" value="ECO:0007669"/>
    <property type="project" value="UniProtKB-UniRule"/>
</dbReference>
<dbReference type="FunFam" id="1.20.58.110:FF:000001">
    <property type="entry name" value="30S ribosomal protein S20"/>
    <property type="match status" value="1"/>
</dbReference>
<dbReference type="Gene3D" id="1.20.58.110">
    <property type="entry name" value="Ribosomal protein S20"/>
    <property type="match status" value="1"/>
</dbReference>
<dbReference type="HAMAP" id="MF_00500">
    <property type="entry name" value="Ribosomal_bS20"/>
    <property type="match status" value="1"/>
</dbReference>
<dbReference type="InterPro" id="IPR002583">
    <property type="entry name" value="Ribosomal_bS20"/>
</dbReference>
<dbReference type="InterPro" id="IPR036510">
    <property type="entry name" value="Ribosomal_bS20_sf"/>
</dbReference>
<dbReference type="NCBIfam" id="TIGR00029">
    <property type="entry name" value="S20"/>
    <property type="match status" value="1"/>
</dbReference>
<dbReference type="PANTHER" id="PTHR33398">
    <property type="entry name" value="30S RIBOSOMAL PROTEIN S20"/>
    <property type="match status" value="1"/>
</dbReference>
<dbReference type="PANTHER" id="PTHR33398:SF1">
    <property type="entry name" value="SMALL RIBOSOMAL SUBUNIT PROTEIN BS20C"/>
    <property type="match status" value="1"/>
</dbReference>
<dbReference type="Pfam" id="PF01649">
    <property type="entry name" value="Ribosomal_S20p"/>
    <property type="match status" value="1"/>
</dbReference>
<dbReference type="SUPFAM" id="SSF46992">
    <property type="entry name" value="Ribosomal protein S20"/>
    <property type="match status" value="1"/>
</dbReference>
<proteinExistence type="inferred from homology"/>
<evidence type="ECO:0000255" key="1">
    <source>
        <dbReference type="HAMAP-Rule" id="MF_00500"/>
    </source>
</evidence>
<evidence type="ECO:0000305" key="2"/>
<keyword id="KW-0687">Ribonucleoprotein</keyword>
<keyword id="KW-0689">Ribosomal protein</keyword>
<keyword id="KW-0694">RNA-binding</keyword>
<keyword id="KW-0699">rRNA-binding</keyword>
<comment type="function">
    <text evidence="1">Binds directly to 16S ribosomal RNA.</text>
</comment>
<comment type="similarity">
    <text evidence="1">Belongs to the bacterial ribosomal protein bS20 family.</text>
</comment>